<sequence length="201" mass="21614">MNTLECLAVAVALAMDAFAVAIATGIRLREVSPRQTFRLAFHFGLFQALMPVAGWTLGLTVRGYIEQWDHWLAFGLLLYIGVRMMREAFEETEENDDRCDPTRGLTLIMLAVATSIDALAVGLSLSVLGIDIVTPAIVIGVVCLLFTATGLHLGRMLSRAESLGRRAALAGGVVLIGIGLRILYEHGVFDTAATLARSVLG</sequence>
<feature type="chain" id="PRO_0000155648" description="Putative manganese efflux pump MntP">
    <location>
        <begin position="1"/>
        <end position="201"/>
    </location>
</feature>
<feature type="transmembrane region" description="Helical" evidence="1">
    <location>
        <begin position="6"/>
        <end position="26"/>
    </location>
</feature>
<feature type="transmembrane region" description="Helical" evidence="1">
    <location>
        <begin position="39"/>
        <end position="59"/>
    </location>
</feature>
<feature type="transmembrane region" description="Helical" evidence="1">
    <location>
        <begin position="105"/>
        <end position="125"/>
    </location>
</feature>
<feature type="transmembrane region" description="Helical" evidence="1">
    <location>
        <begin position="127"/>
        <end position="147"/>
    </location>
</feature>
<feature type="transmembrane region" description="Helical" evidence="1">
    <location>
        <begin position="169"/>
        <end position="189"/>
    </location>
</feature>
<reference key="1">
    <citation type="journal article" date="2004" name="Nat. Biotechnol.">
        <title>The genome sequence of the anaerobic, sulfate-reducing bacterium Desulfovibrio vulgaris Hildenborough.</title>
        <authorList>
            <person name="Heidelberg J.F."/>
            <person name="Seshadri R."/>
            <person name="Haveman S.A."/>
            <person name="Hemme C.L."/>
            <person name="Paulsen I.T."/>
            <person name="Kolonay J.F."/>
            <person name="Eisen J.A."/>
            <person name="Ward N.L."/>
            <person name="Methe B.A."/>
            <person name="Brinkac L.M."/>
            <person name="Daugherty S.C."/>
            <person name="DeBoy R.T."/>
            <person name="Dodson R.J."/>
            <person name="Durkin A.S."/>
            <person name="Madupu R."/>
            <person name="Nelson W.C."/>
            <person name="Sullivan S.A."/>
            <person name="Fouts D.E."/>
            <person name="Haft D.H."/>
            <person name="Selengut J."/>
            <person name="Peterson J.D."/>
            <person name="Davidsen T.M."/>
            <person name="Zafar N."/>
            <person name="Zhou L."/>
            <person name="Radune D."/>
            <person name="Dimitrov G."/>
            <person name="Hance M."/>
            <person name="Tran K."/>
            <person name="Khouri H.M."/>
            <person name="Gill J."/>
            <person name="Utterback T.R."/>
            <person name="Feldblyum T.V."/>
            <person name="Wall J.D."/>
            <person name="Voordouw G."/>
            <person name="Fraser C.M."/>
        </authorList>
    </citation>
    <scope>NUCLEOTIDE SEQUENCE [LARGE SCALE GENOMIC DNA]</scope>
    <source>
        <strain>ATCC 29579 / DSM 644 / CCUG 34227 / NCIMB 8303 / VKM B-1760 / Hildenborough</strain>
    </source>
</reference>
<gene>
    <name evidence="1" type="primary">mntP</name>
    <name type="ordered locus">DVU_2910</name>
</gene>
<name>MNTP_NITV2</name>
<accession>Q727E5</accession>
<keyword id="KW-0997">Cell inner membrane</keyword>
<keyword id="KW-1003">Cell membrane</keyword>
<keyword id="KW-0406">Ion transport</keyword>
<keyword id="KW-0464">Manganese</keyword>
<keyword id="KW-0472">Membrane</keyword>
<keyword id="KW-1185">Reference proteome</keyword>
<keyword id="KW-0812">Transmembrane</keyword>
<keyword id="KW-1133">Transmembrane helix</keyword>
<keyword id="KW-0813">Transport</keyword>
<comment type="function">
    <text evidence="1">Probably functions as a manganese efflux pump.</text>
</comment>
<comment type="subcellular location">
    <subcellularLocation>
        <location evidence="1">Cell inner membrane</location>
        <topology evidence="1">Multi-pass membrane protein</topology>
    </subcellularLocation>
</comment>
<comment type="similarity">
    <text evidence="1">Belongs to the MntP (TC 9.B.29) family.</text>
</comment>
<protein>
    <recommendedName>
        <fullName evidence="1">Putative manganese efflux pump MntP</fullName>
    </recommendedName>
</protein>
<evidence type="ECO:0000255" key="1">
    <source>
        <dbReference type="HAMAP-Rule" id="MF_01521"/>
    </source>
</evidence>
<organism>
    <name type="scientific">Nitratidesulfovibrio vulgaris (strain ATCC 29579 / DSM 644 / CCUG 34227 / NCIMB 8303 / VKM B-1760 / Hildenborough)</name>
    <name type="common">Desulfovibrio vulgaris</name>
    <dbReference type="NCBI Taxonomy" id="882"/>
    <lineage>
        <taxon>Bacteria</taxon>
        <taxon>Pseudomonadati</taxon>
        <taxon>Thermodesulfobacteriota</taxon>
        <taxon>Desulfovibrionia</taxon>
        <taxon>Desulfovibrionales</taxon>
        <taxon>Desulfovibrionaceae</taxon>
        <taxon>Nitratidesulfovibrio</taxon>
    </lineage>
</organism>
<dbReference type="EMBL" id="AE017285">
    <property type="protein sequence ID" value="AAS97382.1"/>
    <property type="molecule type" value="Genomic_DNA"/>
</dbReference>
<dbReference type="RefSeq" id="WP_010940170.1">
    <property type="nucleotide sequence ID" value="NC_002937.3"/>
</dbReference>
<dbReference type="RefSeq" id="YP_012122.1">
    <property type="nucleotide sequence ID" value="NC_002937.3"/>
</dbReference>
<dbReference type="STRING" id="882.DVU_2910"/>
<dbReference type="PaxDb" id="882-DVU_2910"/>
<dbReference type="EnsemblBacteria" id="AAS97382">
    <property type="protein sequence ID" value="AAS97382"/>
    <property type="gene ID" value="DVU_2910"/>
</dbReference>
<dbReference type="KEGG" id="dvu:DVU_2910"/>
<dbReference type="PATRIC" id="fig|882.5.peg.2632"/>
<dbReference type="eggNOG" id="COG1971">
    <property type="taxonomic scope" value="Bacteria"/>
</dbReference>
<dbReference type="HOGENOM" id="CLU_096410_3_0_7"/>
<dbReference type="OrthoDB" id="9811590at2"/>
<dbReference type="PhylomeDB" id="Q727E5"/>
<dbReference type="Proteomes" id="UP000002194">
    <property type="component" value="Chromosome"/>
</dbReference>
<dbReference type="GO" id="GO:0005886">
    <property type="term" value="C:plasma membrane"/>
    <property type="evidence" value="ECO:0007669"/>
    <property type="project" value="UniProtKB-SubCell"/>
</dbReference>
<dbReference type="GO" id="GO:0005384">
    <property type="term" value="F:manganese ion transmembrane transporter activity"/>
    <property type="evidence" value="ECO:0007669"/>
    <property type="project" value="UniProtKB-UniRule"/>
</dbReference>
<dbReference type="HAMAP" id="MF_01521">
    <property type="entry name" value="MntP_pump"/>
    <property type="match status" value="1"/>
</dbReference>
<dbReference type="InterPro" id="IPR003810">
    <property type="entry name" value="Mntp/YtaF"/>
</dbReference>
<dbReference type="InterPro" id="IPR022929">
    <property type="entry name" value="Put_MntP"/>
</dbReference>
<dbReference type="PANTHER" id="PTHR35529">
    <property type="entry name" value="MANGANESE EFFLUX PUMP MNTP-RELATED"/>
    <property type="match status" value="1"/>
</dbReference>
<dbReference type="PANTHER" id="PTHR35529:SF1">
    <property type="entry name" value="MANGANESE EFFLUX PUMP MNTP-RELATED"/>
    <property type="match status" value="1"/>
</dbReference>
<dbReference type="Pfam" id="PF02659">
    <property type="entry name" value="Mntp"/>
    <property type="match status" value="1"/>
</dbReference>
<proteinExistence type="inferred from homology"/>